<proteinExistence type="inferred from homology"/>
<keyword id="KW-0408">Iron</keyword>
<keyword id="KW-1185">Reference proteome</keyword>
<dbReference type="EMBL" id="BA000021">
    <property type="protein sequence ID" value="BAC24222.1"/>
    <property type="molecule type" value="Genomic_DNA"/>
</dbReference>
<dbReference type="SMR" id="Q8D3C5"/>
<dbReference type="STRING" id="36870.gene:10368554"/>
<dbReference type="KEGG" id="wbr:yggX"/>
<dbReference type="eggNOG" id="COG2924">
    <property type="taxonomic scope" value="Bacteria"/>
</dbReference>
<dbReference type="HOGENOM" id="CLU_170994_0_0_6"/>
<dbReference type="OrthoDB" id="9804318at2"/>
<dbReference type="Proteomes" id="UP000000562">
    <property type="component" value="Chromosome"/>
</dbReference>
<dbReference type="GO" id="GO:0005829">
    <property type="term" value="C:cytosol"/>
    <property type="evidence" value="ECO:0007669"/>
    <property type="project" value="TreeGrafter"/>
</dbReference>
<dbReference type="GO" id="GO:0005506">
    <property type="term" value="F:iron ion binding"/>
    <property type="evidence" value="ECO:0007669"/>
    <property type="project" value="UniProtKB-UniRule"/>
</dbReference>
<dbReference type="GO" id="GO:0034599">
    <property type="term" value="P:cellular response to oxidative stress"/>
    <property type="evidence" value="ECO:0007669"/>
    <property type="project" value="TreeGrafter"/>
</dbReference>
<dbReference type="Gene3D" id="1.10.3880.10">
    <property type="entry name" value="Fe(II) trafficking protein YggX"/>
    <property type="match status" value="1"/>
</dbReference>
<dbReference type="HAMAP" id="MF_00686">
    <property type="entry name" value="Fe_traffic_YggX"/>
    <property type="match status" value="1"/>
</dbReference>
<dbReference type="InterPro" id="IPR007457">
    <property type="entry name" value="Fe_traffick_prot_YggX"/>
</dbReference>
<dbReference type="InterPro" id="IPR036766">
    <property type="entry name" value="Fe_traffick_prot_YggX_sf"/>
</dbReference>
<dbReference type="NCBIfam" id="NF003817">
    <property type="entry name" value="PRK05408.1"/>
    <property type="match status" value="1"/>
</dbReference>
<dbReference type="PANTHER" id="PTHR36965">
    <property type="entry name" value="FE(2+)-TRAFFICKING PROTEIN-RELATED"/>
    <property type="match status" value="1"/>
</dbReference>
<dbReference type="PANTHER" id="PTHR36965:SF1">
    <property type="entry name" value="FE(2+)-TRAFFICKING PROTEIN-RELATED"/>
    <property type="match status" value="1"/>
</dbReference>
<dbReference type="Pfam" id="PF04362">
    <property type="entry name" value="Iron_traffic"/>
    <property type="match status" value="1"/>
</dbReference>
<dbReference type="PIRSF" id="PIRSF029827">
    <property type="entry name" value="Fe_traffic_YggX"/>
    <property type="match status" value="1"/>
</dbReference>
<dbReference type="SUPFAM" id="SSF111148">
    <property type="entry name" value="YggX-like"/>
    <property type="match status" value="1"/>
</dbReference>
<reference key="1">
    <citation type="journal article" date="2002" name="Nat. Genet.">
        <title>Genome sequence of the endocellular obligate symbiont of tsetse flies, Wigglesworthia glossinidia.</title>
        <authorList>
            <person name="Akman L."/>
            <person name="Yamashita A."/>
            <person name="Watanabe H."/>
            <person name="Oshima K."/>
            <person name="Shiba T."/>
            <person name="Hattori M."/>
            <person name="Aksoy S."/>
        </authorList>
    </citation>
    <scope>NUCLEOTIDE SEQUENCE [LARGE SCALE GENOMIC DNA]</scope>
</reference>
<comment type="function">
    <text evidence="1">Could be a mediator in iron transactions between iron acquisition and iron-requiring processes, such as synthesis and/or repair of Fe-S clusters in biosynthetic enzymes.</text>
</comment>
<comment type="subunit">
    <text evidence="1">Monomer.</text>
</comment>
<comment type="similarity">
    <text evidence="1">Belongs to the Fe(2+)-trafficking protein family.</text>
</comment>
<evidence type="ECO:0000255" key="1">
    <source>
        <dbReference type="HAMAP-Rule" id="MF_00686"/>
    </source>
</evidence>
<gene>
    <name type="ordered locus">WIGBR0760</name>
</gene>
<sequence length="78" mass="9611">MKRNIFCHFMKNFHERLDFPPYPGSIGKKIYKNISKKAWEIWKNHQTILINEKQLNMLNKKDRKTIEIEMINFLFKNK</sequence>
<protein>
    <recommendedName>
        <fullName evidence="1">Probable Fe(2+)-trafficking protein</fullName>
    </recommendedName>
</protein>
<name>FETP_WIGBR</name>
<organism>
    <name type="scientific">Wigglesworthia glossinidia brevipalpis</name>
    <dbReference type="NCBI Taxonomy" id="36870"/>
    <lineage>
        <taxon>Bacteria</taxon>
        <taxon>Pseudomonadati</taxon>
        <taxon>Pseudomonadota</taxon>
        <taxon>Gammaproteobacteria</taxon>
        <taxon>Enterobacterales</taxon>
        <taxon>Erwiniaceae</taxon>
        <taxon>Wigglesworthia</taxon>
    </lineage>
</organism>
<accession>Q8D3C5</accession>
<feature type="chain" id="PRO_0000214513" description="Probable Fe(2+)-trafficking protein">
    <location>
        <begin position="1"/>
        <end position="78"/>
    </location>
</feature>